<feature type="chain" id="PRO_0000302447" description="Glycine cleavage system H protein">
    <location>
        <begin position="1"/>
        <end position="129"/>
    </location>
</feature>
<feature type="domain" description="Lipoyl-binding" evidence="2">
    <location>
        <begin position="24"/>
        <end position="106"/>
    </location>
</feature>
<feature type="modified residue" description="N6-lipoyllysine" evidence="1">
    <location>
        <position position="65"/>
    </location>
</feature>
<reference key="1">
    <citation type="journal article" date="2007" name="Photosyn. Res.">
        <title>Complete nucleotide sequence of the freshwater unicellular cyanobacterium Synechococcus elongatus PCC 6301 chromosome: gene content and organization.</title>
        <authorList>
            <person name="Sugita C."/>
            <person name="Ogata K."/>
            <person name="Shikata M."/>
            <person name="Jikuya H."/>
            <person name="Takano J."/>
            <person name="Furumichi M."/>
            <person name="Kanehisa M."/>
            <person name="Omata T."/>
            <person name="Sugiura M."/>
            <person name="Sugita M."/>
        </authorList>
    </citation>
    <scope>NUCLEOTIDE SEQUENCE [LARGE SCALE GENOMIC DNA]</scope>
    <source>
        <strain>ATCC 27144 / PCC 6301 / SAUG 1402/1</strain>
    </source>
</reference>
<gene>
    <name evidence="1" type="primary">gcvH</name>
    <name type="ordered locus">syc2047_c</name>
</gene>
<sequence length="129" mass="14069">MALIYPDNLRYFDSHEYVRLDGDIAVIGISAYAIDQLGDIVFLELPEVGSTIAIGASFGTVESVKAVEEVYAPVTGEIIERNEAALEAPEILNSDPYEQGWLLKVQLTGKPDLSDSYDAAQYQALVEGQ</sequence>
<name>GCSH_SYNP6</name>
<comment type="function">
    <text evidence="1">The glycine cleavage system catalyzes the degradation of glycine. The H protein shuttles the methylamine group of glycine from the P protein to the T protein.</text>
</comment>
<comment type="cofactor">
    <cofactor evidence="1">
        <name>(R)-lipoate</name>
        <dbReference type="ChEBI" id="CHEBI:83088"/>
    </cofactor>
    <text evidence="1">Binds 1 lipoyl cofactor covalently.</text>
</comment>
<comment type="subunit">
    <text evidence="1">The glycine cleavage system is composed of four proteins: P, T, L and H.</text>
</comment>
<comment type="similarity">
    <text evidence="1">Belongs to the GcvH family.</text>
</comment>
<accession>Q5N0D3</accession>
<organism>
    <name type="scientific">Synechococcus sp. (strain ATCC 27144 / PCC 6301 / SAUG 1402/1)</name>
    <name type="common">Anacystis nidulans</name>
    <dbReference type="NCBI Taxonomy" id="269084"/>
    <lineage>
        <taxon>Bacteria</taxon>
        <taxon>Bacillati</taxon>
        <taxon>Cyanobacteriota</taxon>
        <taxon>Cyanophyceae</taxon>
        <taxon>Synechococcales</taxon>
        <taxon>Synechococcaceae</taxon>
        <taxon>Synechococcus</taxon>
    </lineage>
</organism>
<proteinExistence type="inferred from homology"/>
<keyword id="KW-0450">Lipoyl</keyword>
<protein>
    <recommendedName>
        <fullName evidence="1">Glycine cleavage system H protein</fullName>
    </recommendedName>
</protein>
<dbReference type="EMBL" id="AP008231">
    <property type="protein sequence ID" value="BAD80237.1"/>
    <property type="molecule type" value="Genomic_DNA"/>
</dbReference>
<dbReference type="RefSeq" id="WP_011244357.1">
    <property type="nucleotide sequence ID" value="NZ_CP085785.1"/>
</dbReference>
<dbReference type="SMR" id="Q5N0D3"/>
<dbReference type="GeneID" id="72430922"/>
<dbReference type="KEGG" id="syc:syc2047_c"/>
<dbReference type="eggNOG" id="COG0509">
    <property type="taxonomic scope" value="Bacteria"/>
</dbReference>
<dbReference type="Proteomes" id="UP000001175">
    <property type="component" value="Chromosome"/>
</dbReference>
<dbReference type="GO" id="GO:0005829">
    <property type="term" value="C:cytosol"/>
    <property type="evidence" value="ECO:0007669"/>
    <property type="project" value="TreeGrafter"/>
</dbReference>
<dbReference type="GO" id="GO:0005960">
    <property type="term" value="C:glycine cleavage complex"/>
    <property type="evidence" value="ECO:0007669"/>
    <property type="project" value="InterPro"/>
</dbReference>
<dbReference type="GO" id="GO:0019464">
    <property type="term" value="P:glycine decarboxylation via glycine cleavage system"/>
    <property type="evidence" value="ECO:0007669"/>
    <property type="project" value="UniProtKB-UniRule"/>
</dbReference>
<dbReference type="CDD" id="cd06848">
    <property type="entry name" value="GCS_H"/>
    <property type="match status" value="1"/>
</dbReference>
<dbReference type="Gene3D" id="2.40.50.100">
    <property type="match status" value="1"/>
</dbReference>
<dbReference type="HAMAP" id="MF_00272">
    <property type="entry name" value="GcvH"/>
    <property type="match status" value="1"/>
</dbReference>
<dbReference type="InterPro" id="IPR003016">
    <property type="entry name" value="2-oxoA_DH_lipoyl-BS"/>
</dbReference>
<dbReference type="InterPro" id="IPR000089">
    <property type="entry name" value="Biotin_lipoyl"/>
</dbReference>
<dbReference type="InterPro" id="IPR002930">
    <property type="entry name" value="GCV_H"/>
</dbReference>
<dbReference type="InterPro" id="IPR033753">
    <property type="entry name" value="GCV_H/Fam206"/>
</dbReference>
<dbReference type="InterPro" id="IPR017453">
    <property type="entry name" value="GCV_H_sub"/>
</dbReference>
<dbReference type="InterPro" id="IPR011053">
    <property type="entry name" value="Single_hybrid_motif"/>
</dbReference>
<dbReference type="NCBIfam" id="TIGR00527">
    <property type="entry name" value="gcvH"/>
    <property type="match status" value="1"/>
</dbReference>
<dbReference type="NCBIfam" id="NF002270">
    <property type="entry name" value="PRK01202.1"/>
    <property type="match status" value="1"/>
</dbReference>
<dbReference type="PANTHER" id="PTHR11715">
    <property type="entry name" value="GLYCINE CLEAVAGE SYSTEM H PROTEIN"/>
    <property type="match status" value="1"/>
</dbReference>
<dbReference type="PANTHER" id="PTHR11715:SF3">
    <property type="entry name" value="GLYCINE CLEAVAGE SYSTEM H PROTEIN-RELATED"/>
    <property type="match status" value="1"/>
</dbReference>
<dbReference type="Pfam" id="PF01597">
    <property type="entry name" value="GCV_H"/>
    <property type="match status" value="1"/>
</dbReference>
<dbReference type="SUPFAM" id="SSF51230">
    <property type="entry name" value="Single hybrid motif"/>
    <property type="match status" value="1"/>
</dbReference>
<dbReference type="PROSITE" id="PS50968">
    <property type="entry name" value="BIOTINYL_LIPOYL"/>
    <property type="match status" value="1"/>
</dbReference>
<dbReference type="PROSITE" id="PS00189">
    <property type="entry name" value="LIPOYL"/>
    <property type="match status" value="1"/>
</dbReference>
<evidence type="ECO:0000255" key="1">
    <source>
        <dbReference type="HAMAP-Rule" id="MF_00272"/>
    </source>
</evidence>
<evidence type="ECO:0000255" key="2">
    <source>
        <dbReference type="PROSITE-ProRule" id="PRU01066"/>
    </source>
</evidence>